<protein>
    <recommendedName>
        <fullName evidence="1">Elongation factor Ts</fullName>
        <shortName evidence="1">EF-Ts</shortName>
    </recommendedName>
</protein>
<organism>
    <name type="scientific">Pseudomonas aeruginosa (strain LESB58)</name>
    <dbReference type="NCBI Taxonomy" id="557722"/>
    <lineage>
        <taxon>Bacteria</taxon>
        <taxon>Pseudomonadati</taxon>
        <taxon>Pseudomonadota</taxon>
        <taxon>Gammaproteobacteria</taxon>
        <taxon>Pseudomonadales</taxon>
        <taxon>Pseudomonadaceae</taxon>
        <taxon>Pseudomonas</taxon>
    </lineage>
</organism>
<name>EFTS_PSEA8</name>
<comment type="function">
    <text evidence="1">Associates with the EF-Tu.GDP complex and induces the exchange of GDP to GTP. It remains bound to the aminoacyl-tRNA.EF-Tu.GTP complex up to the GTP hydrolysis stage on the ribosome.</text>
</comment>
<comment type="subcellular location">
    <subcellularLocation>
        <location evidence="1">Cytoplasm</location>
    </subcellularLocation>
</comment>
<comment type="similarity">
    <text evidence="1">Belongs to the EF-Ts family.</text>
</comment>
<feature type="chain" id="PRO_1000116774" description="Elongation factor Ts">
    <location>
        <begin position="1"/>
        <end position="289"/>
    </location>
</feature>
<feature type="region of interest" description="Involved in Mg(2+) ion dislocation from EF-Tu" evidence="1">
    <location>
        <begin position="82"/>
        <end position="85"/>
    </location>
</feature>
<sequence>MAEITAAMVKELRERTGLGMMECKKALTAAGGDIEKAIDDMRAAGAIKAAKKAGNIAAEGSIAVKIAADNKAAVIIEVNSQTDFLALQDDFKGFVAESLEKAFNEKLTDAAPLVEAREEARLALVAKTGENVNIRRLTRVEGDVVGAYLHGHRIGVVVNLKGGNPELAKDIAMHVAASNPQFLNASEVSEEAIAKEKEIFLALNADKIAGKPENIVENMVKGRISKFLAEASLVEQPFVKNPEVKVGDLAKQAGAEIVSFVRYEVGEGIEKAEVDFAAEVAAQVAATKQ</sequence>
<proteinExistence type="inferred from homology"/>
<accession>B7V7F8</accession>
<reference key="1">
    <citation type="journal article" date="2009" name="Genome Res.">
        <title>Newly introduced genomic prophage islands are critical determinants of in vivo competitiveness in the Liverpool epidemic strain of Pseudomonas aeruginosa.</title>
        <authorList>
            <person name="Winstanley C."/>
            <person name="Langille M.G.I."/>
            <person name="Fothergill J.L."/>
            <person name="Kukavica-Ibrulj I."/>
            <person name="Paradis-Bleau C."/>
            <person name="Sanschagrin F."/>
            <person name="Thomson N.R."/>
            <person name="Winsor G.L."/>
            <person name="Quail M.A."/>
            <person name="Lennard N."/>
            <person name="Bignell A."/>
            <person name="Clarke L."/>
            <person name="Seeger K."/>
            <person name="Saunders D."/>
            <person name="Harris D."/>
            <person name="Parkhill J."/>
            <person name="Hancock R.E.W."/>
            <person name="Brinkman F.S.L."/>
            <person name="Levesque R.C."/>
        </authorList>
    </citation>
    <scope>NUCLEOTIDE SEQUENCE [LARGE SCALE GENOMIC DNA]</scope>
    <source>
        <strain>LESB58</strain>
    </source>
</reference>
<evidence type="ECO:0000255" key="1">
    <source>
        <dbReference type="HAMAP-Rule" id="MF_00050"/>
    </source>
</evidence>
<keyword id="KW-0963">Cytoplasm</keyword>
<keyword id="KW-0251">Elongation factor</keyword>
<keyword id="KW-0648">Protein biosynthesis</keyword>
<gene>
    <name evidence="1" type="primary">tsf</name>
    <name type="ordered locus">PLES_13801</name>
</gene>
<dbReference type="EMBL" id="FM209186">
    <property type="protein sequence ID" value="CAW26108.1"/>
    <property type="molecule type" value="Genomic_DNA"/>
</dbReference>
<dbReference type="RefSeq" id="WP_012613724.1">
    <property type="nucleotide sequence ID" value="NC_011770.1"/>
</dbReference>
<dbReference type="SMR" id="B7V7F8"/>
<dbReference type="KEGG" id="pag:PLES_13801"/>
<dbReference type="HOGENOM" id="CLU_047155_0_2_6"/>
<dbReference type="GO" id="GO:0005737">
    <property type="term" value="C:cytoplasm"/>
    <property type="evidence" value="ECO:0007669"/>
    <property type="project" value="UniProtKB-SubCell"/>
</dbReference>
<dbReference type="GO" id="GO:0003746">
    <property type="term" value="F:translation elongation factor activity"/>
    <property type="evidence" value="ECO:0007669"/>
    <property type="project" value="UniProtKB-UniRule"/>
</dbReference>
<dbReference type="CDD" id="cd14275">
    <property type="entry name" value="UBA_EF-Ts"/>
    <property type="match status" value="1"/>
</dbReference>
<dbReference type="FunFam" id="1.10.286.20:FF:000001">
    <property type="entry name" value="Elongation factor Ts"/>
    <property type="match status" value="1"/>
</dbReference>
<dbReference type="FunFam" id="1.10.8.10:FF:000001">
    <property type="entry name" value="Elongation factor Ts"/>
    <property type="match status" value="1"/>
</dbReference>
<dbReference type="Gene3D" id="1.10.286.20">
    <property type="match status" value="1"/>
</dbReference>
<dbReference type="Gene3D" id="1.10.8.10">
    <property type="entry name" value="DNA helicase RuvA subunit, C-terminal domain"/>
    <property type="match status" value="1"/>
</dbReference>
<dbReference type="Gene3D" id="3.30.479.20">
    <property type="entry name" value="Elongation factor Ts, dimerisation domain"/>
    <property type="match status" value="2"/>
</dbReference>
<dbReference type="HAMAP" id="MF_00050">
    <property type="entry name" value="EF_Ts"/>
    <property type="match status" value="1"/>
</dbReference>
<dbReference type="InterPro" id="IPR036402">
    <property type="entry name" value="EF-Ts_dimer_sf"/>
</dbReference>
<dbReference type="InterPro" id="IPR001816">
    <property type="entry name" value="Transl_elong_EFTs/EF1B"/>
</dbReference>
<dbReference type="InterPro" id="IPR014039">
    <property type="entry name" value="Transl_elong_EFTs/EF1B_dimer"/>
</dbReference>
<dbReference type="InterPro" id="IPR018101">
    <property type="entry name" value="Transl_elong_Ts_CS"/>
</dbReference>
<dbReference type="InterPro" id="IPR009060">
    <property type="entry name" value="UBA-like_sf"/>
</dbReference>
<dbReference type="NCBIfam" id="TIGR00116">
    <property type="entry name" value="tsf"/>
    <property type="match status" value="1"/>
</dbReference>
<dbReference type="PANTHER" id="PTHR11741">
    <property type="entry name" value="ELONGATION FACTOR TS"/>
    <property type="match status" value="1"/>
</dbReference>
<dbReference type="PANTHER" id="PTHR11741:SF0">
    <property type="entry name" value="ELONGATION FACTOR TS, MITOCHONDRIAL"/>
    <property type="match status" value="1"/>
</dbReference>
<dbReference type="Pfam" id="PF00889">
    <property type="entry name" value="EF_TS"/>
    <property type="match status" value="1"/>
</dbReference>
<dbReference type="SUPFAM" id="SSF54713">
    <property type="entry name" value="Elongation factor Ts (EF-Ts), dimerisation domain"/>
    <property type="match status" value="2"/>
</dbReference>
<dbReference type="SUPFAM" id="SSF46934">
    <property type="entry name" value="UBA-like"/>
    <property type="match status" value="1"/>
</dbReference>
<dbReference type="PROSITE" id="PS01126">
    <property type="entry name" value="EF_TS_1"/>
    <property type="match status" value="1"/>
</dbReference>
<dbReference type="PROSITE" id="PS01127">
    <property type="entry name" value="EF_TS_2"/>
    <property type="match status" value="1"/>
</dbReference>